<gene>
    <name evidence="1" type="primary">rpsG</name>
    <name type="ordered locus">CHY_2314</name>
</gene>
<feature type="chain" id="PRO_0000226489" description="Small ribosomal subunit protein uS7">
    <location>
        <begin position="1"/>
        <end position="156"/>
    </location>
</feature>
<reference key="1">
    <citation type="journal article" date="2005" name="PLoS Genet.">
        <title>Life in hot carbon monoxide: the complete genome sequence of Carboxydothermus hydrogenoformans Z-2901.</title>
        <authorList>
            <person name="Wu M."/>
            <person name="Ren Q."/>
            <person name="Durkin A.S."/>
            <person name="Daugherty S.C."/>
            <person name="Brinkac L.M."/>
            <person name="Dodson R.J."/>
            <person name="Madupu R."/>
            <person name="Sullivan S.A."/>
            <person name="Kolonay J.F."/>
            <person name="Nelson W.C."/>
            <person name="Tallon L.J."/>
            <person name="Jones K.M."/>
            <person name="Ulrich L.E."/>
            <person name="Gonzalez J.M."/>
            <person name="Zhulin I.B."/>
            <person name="Robb F.T."/>
            <person name="Eisen J.A."/>
        </authorList>
    </citation>
    <scope>NUCLEOTIDE SEQUENCE [LARGE SCALE GENOMIC DNA]</scope>
    <source>
        <strain>ATCC BAA-161 / DSM 6008 / Z-2901</strain>
    </source>
</reference>
<comment type="function">
    <text evidence="1">One of the primary rRNA binding proteins, it binds directly to 16S rRNA where it nucleates assembly of the head domain of the 30S subunit. Is located at the subunit interface close to the decoding center, probably blocks exit of the E-site tRNA.</text>
</comment>
<comment type="subunit">
    <text evidence="1">Part of the 30S ribosomal subunit. Contacts proteins S9 and S11.</text>
</comment>
<comment type="similarity">
    <text evidence="1">Belongs to the universal ribosomal protein uS7 family.</text>
</comment>
<name>RS7_CARHZ</name>
<accession>Q3A9R1</accession>
<protein>
    <recommendedName>
        <fullName evidence="1">Small ribosomal subunit protein uS7</fullName>
    </recommendedName>
    <alternativeName>
        <fullName evidence="2">30S ribosomal protein S7</fullName>
    </alternativeName>
</protein>
<keyword id="KW-1185">Reference proteome</keyword>
<keyword id="KW-0687">Ribonucleoprotein</keyword>
<keyword id="KW-0689">Ribosomal protein</keyword>
<keyword id="KW-0694">RNA-binding</keyword>
<keyword id="KW-0699">rRNA-binding</keyword>
<keyword id="KW-0820">tRNA-binding</keyword>
<evidence type="ECO:0000255" key="1">
    <source>
        <dbReference type="HAMAP-Rule" id="MF_00480"/>
    </source>
</evidence>
<evidence type="ECO:0000305" key="2"/>
<proteinExistence type="inferred from homology"/>
<organism>
    <name type="scientific">Carboxydothermus hydrogenoformans (strain ATCC BAA-161 / DSM 6008 / Z-2901)</name>
    <dbReference type="NCBI Taxonomy" id="246194"/>
    <lineage>
        <taxon>Bacteria</taxon>
        <taxon>Bacillati</taxon>
        <taxon>Bacillota</taxon>
        <taxon>Clostridia</taxon>
        <taxon>Thermoanaerobacterales</taxon>
        <taxon>Thermoanaerobacteraceae</taxon>
        <taxon>Carboxydothermus</taxon>
    </lineage>
</organism>
<sequence length="156" mass="17848">MPRRGPVPKRDVLPDPIYGSKLVTKLINKTMVDGKKSLAEKICYRAFDIIREKTGRDPLEVFEEAMKNVMPVLEVRPRRVGGANYQVPVEVRPERRQSLAIRWIVNYARERNGRSMEEKLAAEIMDAANGVGGAVKKKEDTHKMAEANKAFAHYRW</sequence>
<dbReference type="EMBL" id="CP000141">
    <property type="protein sequence ID" value="ABB14532.1"/>
    <property type="molecule type" value="Genomic_DNA"/>
</dbReference>
<dbReference type="RefSeq" id="WP_011345196.1">
    <property type="nucleotide sequence ID" value="NC_007503.1"/>
</dbReference>
<dbReference type="SMR" id="Q3A9R1"/>
<dbReference type="FunCoup" id="Q3A9R1">
    <property type="interactions" value="454"/>
</dbReference>
<dbReference type="STRING" id="246194.CHY_2314"/>
<dbReference type="KEGG" id="chy:CHY_2314"/>
<dbReference type="eggNOG" id="COG0049">
    <property type="taxonomic scope" value="Bacteria"/>
</dbReference>
<dbReference type="HOGENOM" id="CLU_072226_1_1_9"/>
<dbReference type="InParanoid" id="Q3A9R1"/>
<dbReference type="OrthoDB" id="9807653at2"/>
<dbReference type="Proteomes" id="UP000002706">
    <property type="component" value="Chromosome"/>
</dbReference>
<dbReference type="GO" id="GO:0015935">
    <property type="term" value="C:small ribosomal subunit"/>
    <property type="evidence" value="ECO:0007669"/>
    <property type="project" value="InterPro"/>
</dbReference>
<dbReference type="GO" id="GO:0019843">
    <property type="term" value="F:rRNA binding"/>
    <property type="evidence" value="ECO:0007669"/>
    <property type="project" value="UniProtKB-UniRule"/>
</dbReference>
<dbReference type="GO" id="GO:0003735">
    <property type="term" value="F:structural constituent of ribosome"/>
    <property type="evidence" value="ECO:0007669"/>
    <property type="project" value="InterPro"/>
</dbReference>
<dbReference type="GO" id="GO:0000049">
    <property type="term" value="F:tRNA binding"/>
    <property type="evidence" value="ECO:0007669"/>
    <property type="project" value="UniProtKB-UniRule"/>
</dbReference>
<dbReference type="GO" id="GO:0006412">
    <property type="term" value="P:translation"/>
    <property type="evidence" value="ECO:0007669"/>
    <property type="project" value="UniProtKB-UniRule"/>
</dbReference>
<dbReference type="CDD" id="cd14869">
    <property type="entry name" value="uS7_Bacteria"/>
    <property type="match status" value="1"/>
</dbReference>
<dbReference type="FunFam" id="1.10.455.10:FF:000001">
    <property type="entry name" value="30S ribosomal protein S7"/>
    <property type="match status" value="1"/>
</dbReference>
<dbReference type="Gene3D" id="1.10.455.10">
    <property type="entry name" value="Ribosomal protein S7 domain"/>
    <property type="match status" value="1"/>
</dbReference>
<dbReference type="HAMAP" id="MF_00480_B">
    <property type="entry name" value="Ribosomal_uS7_B"/>
    <property type="match status" value="1"/>
</dbReference>
<dbReference type="InterPro" id="IPR000235">
    <property type="entry name" value="Ribosomal_uS7"/>
</dbReference>
<dbReference type="InterPro" id="IPR005717">
    <property type="entry name" value="Ribosomal_uS7_bac/org-type"/>
</dbReference>
<dbReference type="InterPro" id="IPR020606">
    <property type="entry name" value="Ribosomal_uS7_CS"/>
</dbReference>
<dbReference type="InterPro" id="IPR023798">
    <property type="entry name" value="Ribosomal_uS7_dom"/>
</dbReference>
<dbReference type="InterPro" id="IPR036823">
    <property type="entry name" value="Ribosomal_uS7_dom_sf"/>
</dbReference>
<dbReference type="NCBIfam" id="TIGR01029">
    <property type="entry name" value="rpsG_bact"/>
    <property type="match status" value="1"/>
</dbReference>
<dbReference type="PANTHER" id="PTHR11205">
    <property type="entry name" value="RIBOSOMAL PROTEIN S7"/>
    <property type="match status" value="1"/>
</dbReference>
<dbReference type="Pfam" id="PF00177">
    <property type="entry name" value="Ribosomal_S7"/>
    <property type="match status" value="1"/>
</dbReference>
<dbReference type="PIRSF" id="PIRSF002122">
    <property type="entry name" value="RPS7p_RPS7a_RPS5e_RPS7o"/>
    <property type="match status" value="1"/>
</dbReference>
<dbReference type="SUPFAM" id="SSF47973">
    <property type="entry name" value="Ribosomal protein S7"/>
    <property type="match status" value="1"/>
</dbReference>
<dbReference type="PROSITE" id="PS00052">
    <property type="entry name" value="RIBOSOMAL_S7"/>
    <property type="match status" value="1"/>
</dbReference>